<sequence length="116" mass="13020">MAAVLTFRRLLTLPRAARGFGVQVSPSGEKITHTGQVYDEKDYRRVRFVDRQKEVNENFAIDLIAQQPVNEVEHRIIACDGGGGALGHPKVYINLDKETKTGTCGYCGLQFKQHHH</sequence>
<evidence type="ECO:0000250" key="1"/>
<evidence type="ECO:0000269" key="2">
    <source>
    </source>
</evidence>
<evidence type="ECO:0000269" key="3">
    <source>
    </source>
</evidence>
<evidence type="ECO:0000305" key="4"/>
<evidence type="ECO:0000305" key="5">
    <source>
    </source>
</evidence>
<evidence type="ECO:0007744" key="6">
    <source>
        <dbReference type="PDB" id="8PW5"/>
    </source>
</evidence>
<evidence type="ECO:0007744" key="7">
    <source>
    </source>
</evidence>
<evidence type="ECO:0007829" key="8">
    <source>
        <dbReference type="PDB" id="6G2J"/>
    </source>
</evidence>
<evidence type="ECO:0007829" key="9">
    <source>
        <dbReference type="PDB" id="6ZTQ"/>
    </source>
</evidence>
<evidence type="ECO:0007829" key="10">
    <source>
        <dbReference type="PDB" id="8IB5"/>
    </source>
</evidence>
<evidence type="ECO:0007829" key="11">
    <source>
        <dbReference type="PDB" id="8OM1"/>
    </source>
</evidence>
<evidence type="ECO:0007829" key="12">
    <source>
        <dbReference type="PDB" id="8RGP"/>
    </source>
</evidence>
<proteinExistence type="evidence at protein level"/>
<protein>
    <recommendedName>
        <fullName>NADH dehydrogenase [ubiquinone] iron-sulfur protein 6, mitochondrial</fullName>
    </recommendedName>
    <alternativeName>
        <fullName>Complex I-13kD-A</fullName>
        <shortName>CI-13kD-A</shortName>
    </alternativeName>
    <alternativeName>
        <fullName>NADH-ubiquinone oxidoreductase 13 kDa-A subunit</fullName>
    </alternativeName>
</protein>
<reference key="1">
    <citation type="journal article" date="2004" name="Genome Res.">
        <title>The status, quality, and expansion of the NIH full-length cDNA project: the Mammalian Gene Collection (MGC).</title>
        <authorList>
            <consortium name="The MGC Project Team"/>
        </authorList>
    </citation>
    <scope>NUCLEOTIDE SEQUENCE [LARGE SCALE MRNA]</scope>
    <source>
        <tissue>Liver</tissue>
    </source>
</reference>
<reference key="2">
    <citation type="journal article" date="1995" name="Gene">
        <title>Genomic sequence, structural organization and evolutionary conservation of the 13.2-kDa subunit of rat NADH:ubiquinone oxidoreductase.</title>
        <authorList>
            <person name="Watson J.D."/>
            <person name="Beckett-Jones B."/>
            <person name="Roy R.N."/>
            <person name="Green N.C."/>
            <person name="Flynn T.G."/>
        </authorList>
    </citation>
    <scope>NUCLEOTIDE SEQUENCE [GENOMIC DNA] OF 34-113</scope>
    <source>
        <strain>CD-1</strain>
    </source>
</reference>
<reference key="3">
    <citation type="journal article" date="2010" name="Cell">
        <title>A tissue-specific atlas of mouse protein phosphorylation and expression.</title>
        <authorList>
            <person name="Huttlin E.L."/>
            <person name="Jedrychowski M.P."/>
            <person name="Elias J.E."/>
            <person name="Goswami T."/>
            <person name="Rad R."/>
            <person name="Beausoleil S.A."/>
            <person name="Villen J."/>
            <person name="Haas W."/>
            <person name="Sowa M.E."/>
            <person name="Gygi S.P."/>
        </authorList>
    </citation>
    <scope>IDENTIFICATION BY MASS SPECTROMETRY [LARGE SCALE ANALYSIS]</scope>
    <source>
        <tissue>Brain</tissue>
        <tissue>Brown adipose tissue</tissue>
        <tissue>Heart</tissue>
        <tissue>Kidney</tissue>
        <tissue>Liver</tissue>
        <tissue>Lung</tissue>
        <tissue>Pancreas</tissue>
        <tissue>Spleen</tissue>
        <tissue>Testis</tissue>
    </source>
</reference>
<reference key="4">
    <citation type="journal article" date="2012" name="Proc. Natl. Acad. Sci. U.S.A.">
        <title>Tissue-specific splicing of an Ndufs6 gene-trap insertion generates a mitochondrial complex I deficiency-specific cardiomyopathy.</title>
        <authorList>
            <person name="Ke B.X."/>
            <person name="Pepe S."/>
            <person name="Grubb D.R."/>
            <person name="Komen J.C."/>
            <person name="Laskowski A."/>
            <person name="Rodda F.A."/>
            <person name="Hardman B.M."/>
            <person name="Pitt J.J."/>
            <person name="Ryan M.T."/>
            <person name="Lazarou M."/>
            <person name="Koleff J."/>
            <person name="Cheung M.M."/>
            <person name="Smolich J.J."/>
            <person name="Thorburn D.R."/>
        </authorList>
    </citation>
    <scope>FUNCTION</scope>
    <scope>DISRUPTION PHENOTYPE</scope>
</reference>
<reference key="5">
    <citation type="journal article" date="2013" name="Proc. Natl. Acad. Sci. U.S.A.">
        <title>Label-free quantitative proteomics of the lysine acetylome in mitochondria identifies substrates of SIRT3 in metabolic pathways.</title>
        <authorList>
            <person name="Rardin M.J."/>
            <person name="Newman J.C."/>
            <person name="Held J.M."/>
            <person name="Cusack M.P."/>
            <person name="Sorensen D.J."/>
            <person name="Li B."/>
            <person name="Schilling B."/>
            <person name="Mooney S.D."/>
            <person name="Kahn C.R."/>
            <person name="Verdin E."/>
            <person name="Gibson B.W."/>
        </authorList>
    </citation>
    <scope>ACETYLATION [LARGE SCALE ANALYSIS] AT LYS-90 AND LYS-112</scope>
    <scope>IDENTIFICATION BY MASS SPECTROMETRY [LARGE SCALE ANALYSIS]</scope>
    <source>
        <tissue>Liver</tissue>
    </source>
</reference>
<reference evidence="6" key="6">
    <citation type="journal article" date="2024" name="Nat. Struct. Mol. Biol.">
        <title>SCAF1 drives the compositional diversity of mammalian respirasomes.</title>
        <authorList>
            <person name="Vercellino I."/>
            <person name="Sazanov L.A."/>
        </authorList>
    </citation>
    <scope>STRUCTURE BY ELECTRON MICROSCOPY (3.60 ANGSTROMS) IN COMPLEX WITH MITOCHONDRIAL RESPIRATORY SUPERCOMPLEX</scope>
    <scope>FUNCTION</scope>
    <scope>SUBCELLULAR LOCATION</scope>
    <scope>SUBUNIT</scope>
</reference>
<accession>P52503</accession>
<accession>Q5M9J7</accession>
<keyword id="KW-0002">3D-structure</keyword>
<keyword id="KW-0007">Acetylation</keyword>
<keyword id="KW-0249">Electron transport</keyword>
<keyword id="KW-0472">Membrane</keyword>
<keyword id="KW-0496">Mitochondrion</keyword>
<keyword id="KW-0999">Mitochondrion inner membrane</keyword>
<keyword id="KW-1185">Reference proteome</keyword>
<keyword id="KW-0679">Respiratory chain</keyword>
<keyword id="KW-0809">Transit peptide</keyword>
<keyword id="KW-0813">Transport</keyword>
<comment type="function">
    <text evidence="3">Accessory subunit of the mitochondrial membrane respiratory chain NADH dehydrogenase (Complex I), that is believed not to be involved in catalysis. Complex I functions in the transfer of electrons from NADH to the respiratory chain. The immediate electron acceptor for the enzyme is believed to be ubiquinone.</text>
</comment>
<comment type="subunit">
    <text evidence="2 3">Mammalian complex I is composed of 45 different subunits. This is a component of the iron-sulfur (IP) fragment of the enzyme.</text>
</comment>
<comment type="subcellular location">
    <subcellularLocation>
        <location evidence="3 5">Mitochondrion inner membrane</location>
        <topology evidence="4">Peripheral membrane protein</topology>
        <orientation evidence="4">Matrix side</orientation>
    </subcellularLocation>
</comment>
<comment type="disruption phenotype">
    <text evidence="2">Male and female mice are fertile but produce smaller litters and pups have a lower neonatal survival rate (PubMed:22474353). While mice are normal during the first 4 months of life, they are prone to rapid onset weight loss and sudden death after this period (PubMed:22474353). They display cardiomyopathy associated with a doubling of heart weight, impaired systolic function and a reduction in functional capacity (PubMed:22474353). Males are most severely affected, with a propensity to develop cardiac failure and diminished survival after 4 months of age (PubMed:22474353). Defects are due to membrane respiratory chain NADH dehydrogenase (Complex I) deficiency (PubMed:22474353). In the knockout experiment described above, mice show a complete knockout of Ndufs6 subunit in heart resulting in marked complex I deficiency, but small amounts of wild-type Ndufs6 mRNA are still present in other tissues, probably due to tissue-specific mRNA splicing, resulting in milder complex I defects (PubMed:22474353).</text>
</comment>
<comment type="similarity">
    <text evidence="4">Belongs to the complex I NDUFS6 subunit family.</text>
</comment>
<organism>
    <name type="scientific">Mus musculus</name>
    <name type="common">Mouse</name>
    <dbReference type="NCBI Taxonomy" id="10090"/>
    <lineage>
        <taxon>Eukaryota</taxon>
        <taxon>Metazoa</taxon>
        <taxon>Chordata</taxon>
        <taxon>Craniata</taxon>
        <taxon>Vertebrata</taxon>
        <taxon>Euteleostomi</taxon>
        <taxon>Mammalia</taxon>
        <taxon>Eutheria</taxon>
        <taxon>Euarchontoglires</taxon>
        <taxon>Glires</taxon>
        <taxon>Rodentia</taxon>
        <taxon>Myomorpha</taxon>
        <taxon>Muroidea</taxon>
        <taxon>Muridae</taxon>
        <taxon>Murinae</taxon>
        <taxon>Mus</taxon>
        <taxon>Mus</taxon>
    </lineage>
</organism>
<name>NDUS6_MOUSE</name>
<dbReference type="EMBL" id="BC086933">
    <property type="protein sequence ID" value="AAH86933.1"/>
    <property type="molecule type" value="mRNA"/>
</dbReference>
<dbReference type="EMBL" id="L38438">
    <property type="protein sequence ID" value="AAB64010.1"/>
    <property type="molecule type" value="Genomic_DNA"/>
</dbReference>
<dbReference type="CCDS" id="CCDS26630.1"/>
<dbReference type="RefSeq" id="NP_035018.1">
    <property type="nucleotide sequence ID" value="NM_010888.3"/>
</dbReference>
<dbReference type="PDB" id="6G2J">
    <property type="method" value="EM"/>
    <property type="resolution" value="3.30 A"/>
    <property type="chains" value="R=1-116"/>
</dbReference>
<dbReference type="PDB" id="6G72">
    <property type="method" value="EM"/>
    <property type="resolution" value="3.90 A"/>
    <property type="chains" value="R=1-116"/>
</dbReference>
<dbReference type="PDB" id="6ZR2">
    <property type="method" value="EM"/>
    <property type="resolution" value="3.10 A"/>
    <property type="chains" value="R=1-116"/>
</dbReference>
<dbReference type="PDB" id="6ZTQ">
    <property type="method" value="EM"/>
    <property type="resolution" value="3.00 A"/>
    <property type="chains" value="R=1-116"/>
</dbReference>
<dbReference type="PDB" id="7AK5">
    <property type="method" value="EM"/>
    <property type="resolution" value="3.17 A"/>
    <property type="chains" value="R=1-114"/>
</dbReference>
<dbReference type="PDB" id="7AK6">
    <property type="method" value="EM"/>
    <property type="resolution" value="3.82 A"/>
    <property type="chains" value="R=1-116"/>
</dbReference>
<dbReference type="PDB" id="7B93">
    <property type="method" value="EM"/>
    <property type="resolution" value="3.04 A"/>
    <property type="chains" value="R=1-116"/>
</dbReference>
<dbReference type="PDB" id="7PSA">
    <property type="method" value="EM"/>
    <property type="resolution" value="3.40 A"/>
    <property type="chains" value="R=1-116"/>
</dbReference>
<dbReference type="PDB" id="8C2S">
    <property type="method" value="EM"/>
    <property type="resolution" value="3.90 A"/>
    <property type="chains" value="R=1-116"/>
</dbReference>
<dbReference type="PDB" id="8CA3">
    <property type="method" value="EM"/>
    <property type="resolution" value="3.20 A"/>
    <property type="chains" value="R=1-116"/>
</dbReference>
<dbReference type="PDB" id="8IAO">
    <property type="method" value="EM"/>
    <property type="resolution" value="4.20 A"/>
    <property type="chains" value="R=1-116"/>
</dbReference>
<dbReference type="PDB" id="8IAP">
    <property type="method" value="EM"/>
    <property type="resolution" value="3.20 A"/>
    <property type="chains" value="R=1-116"/>
</dbReference>
<dbReference type="PDB" id="8IB4">
    <property type="method" value="EM"/>
    <property type="resolution" value="4.30 A"/>
    <property type="chains" value="R=1-116"/>
</dbReference>
<dbReference type="PDB" id="8IB5">
    <property type="method" value="EM"/>
    <property type="resolution" value="3.30 A"/>
    <property type="chains" value="R=1-116"/>
</dbReference>
<dbReference type="PDB" id="8IB9">
    <property type="method" value="EM"/>
    <property type="resolution" value="4.30 A"/>
    <property type="chains" value="R=1-116"/>
</dbReference>
<dbReference type="PDB" id="8IBA">
    <property type="method" value="EM"/>
    <property type="resolution" value="3.20 A"/>
    <property type="chains" value="R=1-116"/>
</dbReference>
<dbReference type="PDB" id="8IBD">
    <property type="method" value="EM"/>
    <property type="resolution" value="4.20 A"/>
    <property type="chains" value="R=1-116"/>
</dbReference>
<dbReference type="PDB" id="8IBE">
    <property type="method" value="EM"/>
    <property type="resolution" value="3.30 A"/>
    <property type="chains" value="R=1-116"/>
</dbReference>
<dbReference type="PDB" id="8IC2">
    <property type="method" value="EM"/>
    <property type="resolution" value="6.30 A"/>
    <property type="chains" value="R=1-116"/>
</dbReference>
<dbReference type="PDB" id="8IC3">
    <property type="method" value="EM"/>
    <property type="resolution" value="3.20 A"/>
    <property type="chains" value="R=1-116"/>
</dbReference>
<dbReference type="PDB" id="8OLT">
    <property type="method" value="EM"/>
    <property type="resolution" value="2.84 A"/>
    <property type="chains" value="R=1-116"/>
</dbReference>
<dbReference type="PDB" id="8OM1">
    <property type="method" value="EM"/>
    <property type="resolution" value="2.39 A"/>
    <property type="chains" value="R=1-116"/>
</dbReference>
<dbReference type="PDB" id="8PW5">
    <property type="method" value="EM"/>
    <property type="resolution" value="3.60 A"/>
    <property type="chains" value="7=1-116"/>
</dbReference>
<dbReference type="PDB" id="8PW6">
    <property type="method" value="EM"/>
    <property type="resolution" value="3.30 A"/>
    <property type="chains" value="7=1-116"/>
</dbReference>
<dbReference type="PDB" id="8PW7">
    <property type="method" value="EM"/>
    <property type="resolution" value="3.50 A"/>
    <property type="chains" value="7=1-116"/>
</dbReference>
<dbReference type="PDB" id="8RGP">
    <property type="method" value="EM"/>
    <property type="resolution" value="3.00 A"/>
    <property type="chains" value="7=1-116"/>
</dbReference>
<dbReference type="PDB" id="8RGQ">
    <property type="method" value="EM"/>
    <property type="resolution" value="3.00 A"/>
    <property type="chains" value="7=1-116"/>
</dbReference>
<dbReference type="PDB" id="8RGR">
    <property type="method" value="EM"/>
    <property type="resolution" value="2.90 A"/>
    <property type="chains" value="7=1-116"/>
</dbReference>
<dbReference type="PDB" id="8RGT">
    <property type="method" value="EM"/>
    <property type="resolution" value="3.10 A"/>
    <property type="chains" value="7=1-116"/>
</dbReference>
<dbReference type="PDB" id="8UCA">
    <property type="method" value="EM"/>
    <property type="resolution" value="3.70 A"/>
    <property type="chains" value="S6/s6=1-116"/>
</dbReference>
<dbReference type="PDB" id="8XNL">
    <property type="method" value="EM"/>
    <property type="resolution" value="3.10 A"/>
    <property type="chains" value="R=1-116"/>
</dbReference>
<dbReference type="PDB" id="8XNM">
    <property type="method" value="EM"/>
    <property type="resolution" value="3.50 A"/>
    <property type="chains" value="R=1-116"/>
</dbReference>
<dbReference type="PDB" id="8XNN">
    <property type="method" value="EM"/>
    <property type="resolution" value="3.60 A"/>
    <property type="chains" value="R=1-116"/>
</dbReference>
<dbReference type="PDB" id="8XNO">
    <property type="method" value="EM"/>
    <property type="resolution" value="3.40 A"/>
    <property type="chains" value="R=1-116"/>
</dbReference>
<dbReference type="PDB" id="8XNP">
    <property type="method" value="EM"/>
    <property type="resolution" value="3.50 A"/>
    <property type="chains" value="R=1-116"/>
</dbReference>
<dbReference type="PDB" id="8XNQ">
    <property type="method" value="EM"/>
    <property type="resolution" value="3.70 A"/>
    <property type="chains" value="R=1-116"/>
</dbReference>
<dbReference type="PDB" id="8XNR">
    <property type="method" value="EM"/>
    <property type="resolution" value="3.30 A"/>
    <property type="chains" value="R=1-116"/>
</dbReference>
<dbReference type="PDB" id="8XNS">
    <property type="method" value="EM"/>
    <property type="resolution" value="3.50 A"/>
    <property type="chains" value="R=1-116"/>
</dbReference>
<dbReference type="PDB" id="8XNT">
    <property type="method" value="EM"/>
    <property type="resolution" value="4.10 A"/>
    <property type="chains" value="R=1-116"/>
</dbReference>
<dbReference type="PDB" id="8XNU">
    <property type="method" value="EM"/>
    <property type="resolution" value="3.60 A"/>
    <property type="chains" value="R=1-116"/>
</dbReference>
<dbReference type="PDB" id="8XNV">
    <property type="method" value="EM"/>
    <property type="resolution" value="3.30 A"/>
    <property type="chains" value="R=1-116"/>
</dbReference>
<dbReference type="PDB" id="8XNW">
    <property type="method" value="EM"/>
    <property type="resolution" value="3.60 A"/>
    <property type="chains" value="R=1-116"/>
</dbReference>
<dbReference type="PDB" id="8XNX">
    <property type="method" value="EM"/>
    <property type="resolution" value="3.50 A"/>
    <property type="chains" value="R=1-116"/>
</dbReference>
<dbReference type="PDB" id="8XNY">
    <property type="method" value="EM"/>
    <property type="resolution" value="4.10 A"/>
    <property type="chains" value="R=1-116"/>
</dbReference>
<dbReference type="PDB" id="8XNZ">
    <property type="method" value="EM"/>
    <property type="resolution" value="3.30 A"/>
    <property type="chains" value="R=1-116"/>
</dbReference>
<dbReference type="PDB" id="8XO0">
    <property type="method" value="EM"/>
    <property type="resolution" value="4.20 A"/>
    <property type="chains" value="R=1-116"/>
</dbReference>
<dbReference type="PDBsum" id="6G2J"/>
<dbReference type="PDBsum" id="6G72"/>
<dbReference type="PDBsum" id="6ZR2"/>
<dbReference type="PDBsum" id="6ZTQ"/>
<dbReference type="PDBsum" id="7AK5"/>
<dbReference type="PDBsum" id="7AK6"/>
<dbReference type="PDBsum" id="7B93"/>
<dbReference type="PDBsum" id="7PSA"/>
<dbReference type="PDBsum" id="8C2S"/>
<dbReference type="PDBsum" id="8CA3"/>
<dbReference type="PDBsum" id="8IAO"/>
<dbReference type="PDBsum" id="8IAP"/>
<dbReference type="PDBsum" id="8IB4"/>
<dbReference type="PDBsum" id="8IB5"/>
<dbReference type="PDBsum" id="8IB9"/>
<dbReference type="PDBsum" id="8IBA"/>
<dbReference type="PDBsum" id="8IBD"/>
<dbReference type="PDBsum" id="8IBE"/>
<dbReference type="PDBsum" id="8IC2"/>
<dbReference type="PDBsum" id="8IC3"/>
<dbReference type="PDBsum" id="8OLT"/>
<dbReference type="PDBsum" id="8OM1"/>
<dbReference type="PDBsum" id="8PW5"/>
<dbReference type="PDBsum" id="8PW6"/>
<dbReference type="PDBsum" id="8PW7"/>
<dbReference type="PDBsum" id="8RGP"/>
<dbReference type="PDBsum" id="8RGQ"/>
<dbReference type="PDBsum" id="8RGR"/>
<dbReference type="PDBsum" id="8RGT"/>
<dbReference type="PDBsum" id="8UCA"/>
<dbReference type="PDBsum" id="8XNL"/>
<dbReference type="PDBsum" id="8XNM"/>
<dbReference type="PDBsum" id="8XNN"/>
<dbReference type="PDBsum" id="8XNO"/>
<dbReference type="PDBsum" id="8XNP"/>
<dbReference type="PDBsum" id="8XNQ"/>
<dbReference type="PDBsum" id="8XNR"/>
<dbReference type="PDBsum" id="8XNS"/>
<dbReference type="PDBsum" id="8XNT"/>
<dbReference type="PDBsum" id="8XNU"/>
<dbReference type="PDBsum" id="8XNV"/>
<dbReference type="PDBsum" id="8XNW"/>
<dbReference type="PDBsum" id="8XNX"/>
<dbReference type="PDBsum" id="8XNY"/>
<dbReference type="PDBsum" id="8XNZ"/>
<dbReference type="PDBsum" id="8XO0"/>
<dbReference type="EMDB" id="EMD-11377"/>
<dbReference type="EMDB" id="EMD-11424"/>
<dbReference type="EMDB" id="EMD-11810"/>
<dbReference type="EMDB" id="EMD-11811"/>
<dbReference type="EMDB" id="EMD-12095"/>
<dbReference type="EMDB" id="EMD-13611"/>
<dbReference type="EMDB" id="EMD-16398"/>
<dbReference type="EMDB" id="EMD-16516"/>
<dbReference type="EMDB" id="EMD-16962"/>
<dbReference type="EMDB" id="EMD-16965"/>
<dbReference type="EMDB" id="EMD-17989"/>
<dbReference type="EMDB" id="EMD-17990"/>
<dbReference type="EMDB" id="EMD-17991"/>
<dbReference type="EMDB" id="EMD-19145"/>
<dbReference type="EMDB" id="EMD-19146"/>
<dbReference type="EMDB" id="EMD-19147"/>
<dbReference type="EMDB" id="EMD-19148"/>
<dbReference type="EMDB" id="EMD-35313"/>
<dbReference type="EMDB" id="EMD-35314"/>
<dbReference type="EMDB" id="EMD-35331"/>
<dbReference type="EMDB" id="EMD-35332"/>
<dbReference type="EMDB" id="EMD-35336"/>
<dbReference type="EMDB" id="EMD-35337"/>
<dbReference type="EMDB" id="EMD-35340"/>
<dbReference type="EMDB" id="EMD-35341"/>
<dbReference type="EMDB" id="EMD-35352"/>
<dbReference type="EMDB" id="EMD-35353"/>
<dbReference type="EMDB" id="EMD-38506"/>
<dbReference type="EMDB" id="EMD-38507"/>
<dbReference type="EMDB" id="EMD-38508"/>
<dbReference type="EMDB" id="EMD-38509"/>
<dbReference type="EMDB" id="EMD-38510"/>
<dbReference type="EMDB" id="EMD-38511"/>
<dbReference type="EMDB" id="EMD-38512"/>
<dbReference type="EMDB" id="EMD-38513"/>
<dbReference type="EMDB" id="EMD-38514"/>
<dbReference type="EMDB" id="EMD-38515"/>
<dbReference type="EMDB" id="EMD-38516"/>
<dbReference type="EMDB" id="EMD-38517"/>
<dbReference type="EMDB" id="EMD-38518"/>
<dbReference type="EMDB" id="EMD-38519"/>
<dbReference type="EMDB" id="EMD-38520"/>
<dbReference type="EMDB" id="EMD-38521"/>
<dbReference type="EMDB" id="EMD-42122"/>
<dbReference type="EMDB" id="EMD-4345"/>
<dbReference type="EMDB" id="EMD-4356"/>
<dbReference type="SMR" id="P52503"/>
<dbReference type="BioGRID" id="240437">
    <property type="interactions" value="36"/>
</dbReference>
<dbReference type="ComplexPortal" id="CPX-266">
    <property type="entry name" value="Mitochondrial respiratory chain complex I"/>
</dbReference>
<dbReference type="CORUM" id="P52503"/>
<dbReference type="FunCoup" id="P52503">
    <property type="interactions" value="1664"/>
</dbReference>
<dbReference type="IntAct" id="P52503">
    <property type="interactions" value="3"/>
</dbReference>
<dbReference type="STRING" id="10090.ENSMUSP00000022097"/>
<dbReference type="GlyGen" id="P52503">
    <property type="glycosylation" value="1 site, 1 O-linked glycan (1 site)"/>
</dbReference>
<dbReference type="iPTMnet" id="P52503"/>
<dbReference type="PhosphoSitePlus" id="P52503"/>
<dbReference type="SwissPalm" id="P52503"/>
<dbReference type="jPOST" id="P52503"/>
<dbReference type="PaxDb" id="10090-ENSMUSP00000022097"/>
<dbReference type="PeptideAtlas" id="P52503"/>
<dbReference type="ProteomicsDB" id="293647"/>
<dbReference type="Pumba" id="P52503"/>
<dbReference type="Antibodypedia" id="22354">
    <property type="antibodies" value="213 antibodies from 31 providers"/>
</dbReference>
<dbReference type="DNASU" id="407785"/>
<dbReference type="Ensembl" id="ENSMUST00000022097.6">
    <property type="protein sequence ID" value="ENSMUSP00000022097.6"/>
    <property type="gene ID" value="ENSMUSG00000021606.9"/>
</dbReference>
<dbReference type="GeneID" id="407785"/>
<dbReference type="KEGG" id="mmu:407785"/>
<dbReference type="UCSC" id="uc007rdh.2">
    <property type="organism name" value="mouse"/>
</dbReference>
<dbReference type="AGR" id="MGI:107932"/>
<dbReference type="CTD" id="4726"/>
<dbReference type="MGI" id="MGI:107932">
    <property type="gene designation" value="Ndufs6"/>
</dbReference>
<dbReference type="VEuPathDB" id="HostDB:ENSMUSG00000021606"/>
<dbReference type="eggNOG" id="KOG3456">
    <property type="taxonomic scope" value="Eukaryota"/>
</dbReference>
<dbReference type="GeneTree" id="ENSGT00390000015775"/>
<dbReference type="HOGENOM" id="CLU_083053_3_2_1"/>
<dbReference type="InParanoid" id="P52503"/>
<dbReference type="OrthoDB" id="54713at9989"/>
<dbReference type="PhylomeDB" id="P52503"/>
<dbReference type="TreeFam" id="TF315128"/>
<dbReference type="Reactome" id="R-MMU-611105">
    <property type="pathway name" value="Respiratory electron transport"/>
</dbReference>
<dbReference type="Reactome" id="R-MMU-6799198">
    <property type="pathway name" value="Complex I biogenesis"/>
</dbReference>
<dbReference type="BioGRID-ORCS" id="407785">
    <property type="hits" value="4 hits in 77 CRISPR screens"/>
</dbReference>
<dbReference type="CD-CODE" id="CE726F99">
    <property type="entry name" value="Postsynaptic density"/>
</dbReference>
<dbReference type="ChiTaRS" id="Ndufs6">
    <property type="organism name" value="mouse"/>
</dbReference>
<dbReference type="PRO" id="PR:P52503"/>
<dbReference type="Proteomes" id="UP000000589">
    <property type="component" value="Chromosome 13"/>
</dbReference>
<dbReference type="RNAct" id="P52503">
    <property type="molecule type" value="protein"/>
</dbReference>
<dbReference type="Bgee" id="ENSMUSG00000021606">
    <property type="expression patterns" value="Expressed in right kidney and 122 other cell types or tissues"/>
</dbReference>
<dbReference type="ExpressionAtlas" id="P52503">
    <property type="expression patterns" value="baseline and differential"/>
</dbReference>
<dbReference type="GO" id="GO:0005743">
    <property type="term" value="C:mitochondrial inner membrane"/>
    <property type="evidence" value="ECO:0000314"/>
    <property type="project" value="UniProtKB"/>
</dbReference>
<dbReference type="GO" id="GO:0005739">
    <property type="term" value="C:mitochondrion"/>
    <property type="evidence" value="ECO:0000314"/>
    <property type="project" value="MGI"/>
</dbReference>
<dbReference type="GO" id="GO:0045271">
    <property type="term" value="C:respiratory chain complex I"/>
    <property type="evidence" value="ECO:0000314"/>
    <property type="project" value="UniProtKB"/>
</dbReference>
<dbReference type="GO" id="GO:0009060">
    <property type="term" value="P:aerobic respiration"/>
    <property type="evidence" value="ECO:0000303"/>
    <property type="project" value="ComplexPortal"/>
</dbReference>
<dbReference type="GO" id="GO:0090398">
    <property type="term" value="P:cellular senescence"/>
    <property type="evidence" value="ECO:0000314"/>
    <property type="project" value="MGI"/>
</dbReference>
<dbReference type="GO" id="GO:0072359">
    <property type="term" value="P:circulatory system development"/>
    <property type="evidence" value="ECO:0000315"/>
    <property type="project" value="MGI"/>
</dbReference>
<dbReference type="GO" id="GO:0030330">
    <property type="term" value="P:DNA damage response, signal transduction by p53 class mediator"/>
    <property type="evidence" value="ECO:0000315"/>
    <property type="project" value="MGI"/>
</dbReference>
<dbReference type="GO" id="GO:0006631">
    <property type="term" value="P:fatty acid metabolic process"/>
    <property type="evidence" value="ECO:0000315"/>
    <property type="project" value="MGI"/>
</dbReference>
<dbReference type="GO" id="GO:0010467">
    <property type="term" value="P:gene expression"/>
    <property type="evidence" value="ECO:0000315"/>
    <property type="project" value="MGI"/>
</dbReference>
<dbReference type="GO" id="GO:0001822">
    <property type="term" value="P:kidney development"/>
    <property type="evidence" value="ECO:0000315"/>
    <property type="project" value="MGI"/>
</dbReference>
<dbReference type="GO" id="GO:0072497">
    <property type="term" value="P:mesenchymal stem cell differentiation"/>
    <property type="evidence" value="ECO:0000314"/>
    <property type="project" value="MGI"/>
</dbReference>
<dbReference type="GO" id="GO:0097168">
    <property type="term" value="P:mesenchymal stem cell proliferation"/>
    <property type="evidence" value="ECO:0000314"/>
    <property type="project" value="MGI"/>
</dbReference>
<dbReference type="GO" id="GO:0006120">
    <property type="term" value="P:mitochondrial electron transport, NADH to ubiquinone"/>
    <property type="evidence" value="ECO:0007669"/>
    <property type="project" value="InterPro"/>
</dbReference>
<dbReference type="GO" id="GO:0032981">
    <property type="term" value="P:mitochondrial respiratory chain complex I assembly"/>
    <property type="evidence" value="ECO:0000315"/>
    <property type="project" value="MGI"/>
</dbReference>
<dbReference type="GO" id="GO:0007005">
    <property type="term" value="P:mitochondrion organization"/>
    <property type="evidence" value="ECO:0000315"/>
    <property type="project" value="MGI"/>
</dbReference>
<dbReference type="GO" id="GO:0035264">
    <property type="term" value="P:multicellular organism growth"/>
    <property type="evidence" value="ECO:0000315"/>
    <property type="project" value="MGI"/>
</dbReference>
<dbReference type="GO" id="GO:0006936">
    <property type="term" value="P:muscle contraction"/>
    <property type="evidence" value="ECO:0000315"/>
    <property type="project" value="MGI"/>
</dbReference>
<dbReference type="GO" id="GO:0042776">
    <property type="term" value="P:proton motive force-driven mitochondrial ATP synthesis"/>
    <property type="evidence" value="ECO:0000303"/>
    <property type="project" value="ComplexPortal"/>
</dbReference>
<dbReference type="GO" id="GO:0072593">
    <property type="term" value="P:reactive oxygen species metabolic process"/>
    <property type="evidence" value="ECO:0000315"/>
    <property type="project" value="MGI"/>
</dbReference>
<dbReference type="GO" id="GO:0051881">
    <property type="term" value="P:regulation of mitochondrial membrane potential"/>
    <property type="evidence" value="ECO:0000315"/>
    <property type="project" value="MGI"/>
</dbReference>
<dbReference type="GO" id="GO:0061458">
    <property type="term" value="P:reproductive system development"/>
    <property type="evidence" value="ECO:0000315"/>
    <property type="project" value="MGI"/>
</dbReference>
<dbReference type="GO" id="GO:0022904">
    <property type="term" value="P:respiratory electron transport chain"/>
    <property type="evidence" value="ECO:0000315"/>
    <property type="project" value="MGI"/>
</dbReference>
<dbReference type="GO" id="GO:0017145">
    <property type="term" value="P:stem cell division"/>
    <property type="evidence" value="ECO:0000314"/>
    <property type="project" value="MGI"/>
</dbReference>
<dbReference type="FunFam" id="2.60.260.40:FF:000002">
    <property type="entry name" value="NADH dehydrogenase [ubiquinone] iron-sulfur protein 6, mitochondrial"/>
    <property type="match status" value="1"/>
</dbReference>
<dbReference type="Gene3D" id="2.60.260.40">
    <property type="entry name" value="q5lls5 like domains"/>
    <property type="match status" value="1"/>
</dbReference>
<dbReference type="InterPro" id="IPR016668">
    <property type="entry name" value="NDUFS6"/>
</dbReference>
<dbReference type="InterPro" id="IPR019401">
    <property type="entry name" value="Znf_CHCC"/>
</dbReference>
<dbReference type="PANTHER" id="PTHR13156:SF0">
    <property type="entry name" value="NADH DEHYDROGENASE [UBIQUINONE] IRON-SULFUR PROTEIN 6, MITOCHONDRIAL"/>
    <property type="match status" value="1"/>
</dbReference>
<dbReference type="PANTHER" id="PTHR13156">
    <property type="entry name" value="NADH-UBIQUINONE OXIDOREDUCTASE 13 KD-A SUBUNIT"/>
    <property type="match status" value="1"/>
</dbReference>
<dbReference type="Pfam" id="PF10276">
    <property type="entry name" value="zf-CHCC"/>
    <property type="match status" value="1"/>
</dbReference>
<dbReference type="PIRSF" id="PIRSF016564">
    <property type="entry name" value="CI-13KD-A"/>
    <property type="match status" value="1"/>
</dbReference>
<gene>
    <name type="primary">Ndufs6</name>
    <name type="synonym">Ip13</name>
</gene>
<feature type="transit peptide" description="Mitochondrion" evidence="1">
    <location>
        <begin position="1"/>
        <end position="20"/>
    </location>
</feature>
<feature type="chain" id="PRO_0000043171" description="NADH dehydrogenase [ubiquinone] iron-sulfur protein 6, mitochondrial">
    <location>
        <begin position="21"/>
        <end position="116"/>
    </location>
</feature>
<feature type="modified residue" description="N6-acetyllysine" evidence="7">
    <location>
        <position position="90"/>
    </location>
</feature>
<feature type="modified residue" description="N6-acetyllysine" evidence="7">
    <location>
        <position position="112"/>
    </location>
</feature>
<feature type="sequence conflict" description="In Ref. 2; AAB64010." evidence="4" ref="2">
    <original>V</original>
    <variation>VTM</variation>
    <location>
        <position position="37"/>
    </location>
</feature>
<feature type="sequence conflict" description="In Ref. 2; AAB64010." evidence="4" ref="2">
    <original>R</original>
    <variation>H</variation>
    <location>
        <position position="75"/>
    </location>
</feature>
<feature type="sequence conflict" description="In Ref. 2; AAB64010." evidence="4" ref="2">
    <original>ALG</original>
    <variation>SLV</variation>
    <location>
        <begin position="85"/>
        <end position="87"/>
    </location>
</feature>
<feature type="sequence conflict" description="In Ref. 2; AAB64010." evidence="4" ref="2">
    <original>G</original>
    <variation>A</variation>
    <location>
        <position position="105"/>
    </location>
</feature>
<feature type="strand" evidence="12">
    <location>
        <begin position="26"/>
        <end position="28"/>
    </location>
</feature>
<feature type="helix" evidence="11">
    <location>
        <begin position="43"/>
        <end position="48"/>
    </location>
</feature>
<feature type="strand" evidence="10">
    <location>
        <begin position="51"/>
        <end position="53"/>
    </location>
</feature>
<feature type="helix" evidence="11">
    <location>
        <begin position="60"/>
        <end position="64"/>
    </location>
</feature>
<feature type="strand" evidence="11">
    <location>
        <begin position="70"/>
        <end position="79"/>
    </location>
</feature>
<feature type="strand" evidence="8">
    <location>
        <begin position="81"/>
        <end position="83"/>
    </location>
</feature>
<feature type="helix" evidence="11">
    <location>
        <begin position="84"/>
        <end position="86"/>
    </location>
</feature>
<feature type="strand" evidence="11">
    <location>
        <begin position="91"/>
        <end position="94"/>
    </location>
</feature>
<feature type="strand" evidence="9">
    <location>
        <begin position="98"/>
        <end position="100"/>
    </location>
</feature>
<feature type="turn" evidence="11">
    <location>
        <begin position="105"/>
        <end position="107"/>
    </location>
</feature>
<feature type="strand" evidence="11">
    <location>
        <begin position="110"/>
        <end position="113"/>
    </location>
</feature>